<accession>Q1IW42</accession>
<evidence type="ECO:0000255" key="1">
    <source>
        <dbReference type="HAMAP-Rule" id="MF_00091"/>
    </source>
</evidence>
<evidence type="ECO:0000305" key="2"/>
<sequence length="155" mass="17212">MANVESFDLDHTKVQAPYVRLAGVKTTPRGDQISKYDLRLLQPNRGAIEPAALHTLEHLLAGYLRDHLQNVVDVSPMGCRTGLYLAVIGEPDEEGVLQAFEAALRDTATHDRPIPGVSELECGNYRDHDLQAARQYARDALTQGLKVQKTILLQR</sequence>
<name>LUXS_DEIGD</name>
<reference key="1">
    <citation type="submission" date="2006-04" db="EMBL/GenBank/DDBJ databases">
        <title>Complete sequence of chromosome of Deinococcus geothermalis DSM 11300.</title>
        <authorList>
            <person name="Copeland A."/>
            <person name="Lucas S."/>
            <person name="Lapidus A."/>
            <person name="Barry K."/>
            <person name="Detter J.C."/>
            <person name="Glavina del Rio T."/>
            <person name="Hammon N."/>
            <person name="Israni S."/>
            <person name="Dalin E."/>
            <person name="Tice H."/>
            <person name="Pitluck S."/>
            <person name="Brettin T."/>
            <person name="Bruce D."/>
            <person name="Han C."/>
            <person name="Tapia R."/>
            <person name="Saunders E."/>
            <person name="Gilna P."/>
            <person name="Schmutz J."/>
            <person name="Larimer F."/>
            <person name="Land M."/>
            <person name="Hauser L."/>
            <person name="Kyrpides N."/>
            <person name="Kim E."/>
            <person name="Daly M.J."/>
            <person name="Fredrickson J.K."/>
            <person name="Makarova K.S."/>
            <person name="Gaidamakova E.K."/>
            <person name="Zhai M."/>
            <person name="Richardson P."/>
        </authorList>
    </citation>
    <scope>NUCLEOTIDE SEQUENCE [LARGE SCALE GENOMIC DNA]</scope>
    <source>
        <strain>DSM 11300 / CIP 105573 / AG-3a</strain>
    </source>
</reference>
<proteinExistence type="inferred from homology"/>
<gene>
    <name evidence="1" type="primary">luxS</name>
    <name type="ordered locus">Dgeo_2248</name>
</gene>
<keyword id="KW-0071">Autoinducer synthesis</keyword>
<keyword id="KW-0408">Iron</keyword>
<keyword id="KW-0456">Lyase</keyword>
<keyword id="KW-0479">Metal-binding</keyword>
<keyword id="KW-0673">Quorum sensing</keyword>
<protein>
    <recommendedName>
        <fullName evidence="1">S-ribosylhomocysteine lyase</fullName>
        <ecNumber evidence="1">4.4.1.21</ecNumber>
    </recommendedName>
    <alternativeName>
        <fullName evidence="1">AI-2 synthesis protein</fullName>
    </alternativeName>
    <alternativeName>
        <fullName evidence="1">Autoinducer-2 production protein LuxS</fullName>
    </alternativeName>
</protein>
<dbReference type="EC" id="4.4.1.21" evidence="1"/>
<dbReference type="EMBL" id="CP000359">
    <property type="protein sequence ID" value="ABF46542.1"/>
    <property type="status" value="ALT_INIT"/>
    <property type="molecule type" value="Genomic_DNA"/>
</dbReference>
<dbReference type="RefSeq" id="WP_011531363.1">
    <property type="nucleotide sequence ID" value="NC_008025.1"/>
</dbReference>
<dbReference type="SMR" id="Q1IW42"/>
<dbReference type="STRING" id="319795.Dgeo_2248"/>
<dbReference type="KEGG" id="dge:Dgeo_2248"/>
<dbReference type="eggNOG" id="COG1854">
    <property type="taxonomic scope" value="Bacteria"/>
</dbReference>
<dbReference type="HOGENOM" id="CLU_107531_2_0_0"/>
<dbReference type="BRENDA" id="4.4.1.21">
    <property type="organism ID" value="10152"/>
</dbReference>
<dbReference type="Proteomes" id="UP000002431">
    <property type="component" value="Chromosome"/>
</dbReference>
<dbReference type="GO" id="GO:0005506">
    <property type="term" value="F:iron ion binding"/>
    <property type="evidence" value="ECO:0007669"/>
    <property type="project" value="InterPro"/>
</dbReference>
<dbReference type="GO" id="GO:0043768">
    <property type="term" value="F:S-ribosylhomocysteine lyase activity"/>
    <property type="evidence" value="ECO:0007669"/>
    <property type="project" value="UniProtKB-UniRule"/>
</dbReference>
<dbReference type="GO" id="GO:0009372">
    <property type="term" value="P:quorum sensing"/>
    <property type="evidence" value="ECO:0007669"/>
    <property type="project" value="UniProtKB-UniRule"/>
</dbReference>
<dbReference type="Gene3D" id="3.30.1360.80">
    <property type="entry name" value="S-ribosylhomocysteinase (LuxS)"/>
    <property type="match status" value="1"/>
</dbReference>
<dbReference type="HAMAP" id="MF_00091">
    <property type="entry name" value="LuxS"/>
    <property type="match status" value="1"/>
</dbReference>
<dbReference type="InterPro" id="IPR037005">
    <property type="entry name" value="LuxS_sf"/>
</dbReference>
<dbReference type="InterPro" id="IPR011249">
    <property type="entry name" value="Metalloenz_LuxS/M16"/>
</dbReference>
<dbReference type="InterPro" id="IPR003815">
    <property type="entry name" value="S-ribosylhomocysteinase"/>
</dbReference>
<dbReference type="NCBIfam" id="NF002606">
    <property type="entry name" value="PRK02260.2-4"/>
    <property type="match status" value="1"/>
</dbReference>
<dbReference type="PANTHER" id="PTHR35799">
    <property type="entry name" value="S-RIBOSYLHOMOCYSTEINE LYASE"/>
    <property type="match status" value="1"/>
</dbReference>
<dbReference type="PANTHER" id="PTHR35799:SF1">
    <property type="entry name" value="S-RIBOSYLHOMOCYSTEINE LYASE"/>
    <property type="match status" value="1"/>
</dbReference>
<dbReference type="Pfam" id="PF02664">
    <property type="entry name" value="LuxS"/>
    <property type="match status" value="1"/>
</dbReference>
<dbReference type="PIRSF" id="PIRSF006160">
    <property type="entry name" value="AI2"/>
    <property type="match status" value="1"/>
</dbReference>
<dbReference type="PRINTS" id="PR01487">
    <property type="entry name" value="LUXSPROTEIN"/>
</dbReference>
<dbReference type="SUPFAM" id="SSF63411">
    <property type="entry name" value="LuxS/MPP-like metallohydrolase"/>
    <property type="match status" value="1"/>
</dbReference>
<feature type="chain" id="PRO_0000297993" description="S-ribosylhomocysteine lyase">
    <location>
        <begin position="1"/>
        <end position="155"/>
    </location>
</feature>
<feature type="binding site" evidence="1">
    <location>
        <position position="54"/>
    </location>
    <ligand>
        <name>Fe cation</name>
        <dbReference type="ChEBI" id="CHEBI:24875"/>
    </ligand>
</feature>
<feature type="binding site" evidence="1">
    <location>
        <position position="58"/>
    </location>
    <ligand>
        <name>Fe cation</name>
        <dbReference type="ChEBI" id="CHEBI:24875"/>
    </ligand>
</feature>
<feature type="binding site" evidence="1">
    <location>
        <position position="122"/>
    </location>
    <ligand>
        <name>Fe cation</name>
        <dbReference type="ChEBI" id="CHEBI:24875"/>
    </ligand>
</feature>
<comment type="function">
    <text evidence="1">Involved in the synthesis of autoinducer 2 (AI-2) which is secreted by bacteria and is used to communicate both the cell density and the metabolic potential of the environment. The regulation of gene expression in response to changes in cell density is called quorum sensing. Catalyzes the transformation of S-ribosylhomocysteine (RHC) to homocysteine (HC) and 4,5-dihydroxy-2,3-pentadione (DPD).</text>
</comment>
<comment type="catalytic activity">
    <reaction evidence="1">
        <text>S-(5-deoxy-D-ribos-5-yl)-L-homocysteine = (S)-4,5-dihydroxypentane-2,3-dione + L-homocysteine</text>
        <dbReference type="Rhea" id="RHEA:17753"/>
        <dbReference type="ChEBI" id="CHEBI:29484"/>
        <dbReference type="ChEBI" id="CHEBI:58195"/>
        <dbReference type="ChEBI" id="CHEBI:58199"/>
        <dbReference type="EC" id="4.4.1.21"/>
    </reaction>
</comment>
<comment type="cofactor">
    <cofactor evidence="1">
        <name>Fe cation</name>
        <dbReference type="ChEBI" id="CHEBI:24875"/>
    </cofactor>
    <text evidence="1">Binds 1 Fe cation per subunit.</text>
</comment>
<comment type="subunit">
    <text evidence="1">Homodimer.</text>
</comment>
<comment type="similarity">
    <text evidence="1">Belongs to the LuxS family.</text>
</comment>
<comment type="sequence caution" evidence="2">
    <conflict type="erroneous initiation">
        <sequence resource="EMBL-CDS" id="ABF46542"/>
    </conflict>
</comment>
<organism>
    <name type="scientific">Deinococcus geothermalis (strain DSM 11300 / CIP 105573 / AG-3a)</name>
    <dbReference type="NCBI Taxonomy" id="319795"/>
    <lineage>
        <taxon>Bacteria</taxon>
        <taxon>Thermotogati</taxon>
        <taxon>Deinococcota</taxon>
        <taxon>Deinococci</taxon>
        <taxon>Deinococcales</taxon>
        <taxon>Deinococcaceae</taxon>
        <taxon>Deinococcus</taxon>
    </lineage>
</organism>